<feature type="chain" id="PRO_1000148580" description="2,3,4,5-tetrahydropyridine-2,6-dicarboxylate N-succinyltransferase">
    <location>
        <begin position="1"/>
        <end position="285"/>
    </location>
</feature>
<feature type="binding site" evidence="1">
    <location>
        <position position="111"/>
    </location>
    <ligand>
        <name>substrate</name>
    </ligand>
</feature>
<feature type="binding site" evidence="1">
    <location>
        <position position="148"/>
    </location>
    <ligand>
        <name>substrate</name>
    </ligand>
</feature>
<accession>B9J8D1</accession>
<organism>
    <name type="scientific">Rhizobium rhizogenes (strain K84 / ATCC BAA-868)</name>
    <name type="common">Agrobacterium radiobacter</name>
    <dbReference type="NCBI Taxonomy" id="311403"/>
    <lineage>
        <taxon>Bacteria</taxon>
        <taxon>Pseudomonadati</taxon>
        <taxon>Pseudomonadota</taxon>
        <taxon>Alphaproteobacteria</taxon>
        <taxon>Hyphomicrobiales</taxon>
        <taxon>Rhizobiaceae</taxon>
        <taxon>Rhizobium/Agrobacterium group</taxon>
        <taxon>Rhizobium</taxon>
    </lineage>
</organism>
<proteinExistence type="inferred from homology"/>
<name>DAPD_RHIR8</name>
<gene>
    <name evidence="1" type="primary">dapD</name>
    <name type="ordered locus">Arad_0685</name>
</gene>
<keyword id="KW-0012">Acyltransferase</keyword>
<keyword id="KW-0028">Amino-acid biosynthesis</keyword>
<keyword id="KW-0963">Cytoplasm</keyword>
<keyword id="KW-0220">Diaminopimelate biosynthesis</keyword>
<keyword id="KW-0457">Lysine biosynthesis</keyword>
<keyword id="KW-0677">Repeat</keyword>
<keyword id="KW-0808">Transferase</keyword>
<reference key="1">
    <citation type="journal article" date="2009" name="J. Bacteriol.">
        <title>Genome sequences of three Agrobacterium biovars help elucidate the evolution of multichromosome genomes in bacteria.</title>
        <authorList>
            <person name="Slater S.C."/>
            <person name="Goldman B.S."/>
            <person name="Goodner B."/>
            <person name="Setubal J.C."/>
            <person name="Farrand S.K."/>
            <person name="Nester E.W."/>
            <person name="Burr T.J."/>
            <person name="Banta L."/>
            <person name="Dickerman A.W."/>
            <person name="Paulsen I."/>
            <person name="Otten L."/>
            <person name="Suen G."/>
            <person name="Welch R."/>
            <person name="Almeida N.F."/>
            <person name="Arnold F."/>
            <person name="Burton O.T."/>
            <person name="Du Z."/>
            <person name="Ewing A."/>
            <person name="Godsy E."/>
            <person name="Heisel S."/>
            <person name="Houmiel K.L."/>
            <person name="Jhaveri J."/>
            <person name="Lu J."/>
            <person name="Miller N.M."/>
            <person name="Norton S."/>
            <person name="Chen Q."/>
            <person name="Phoolcharoen W."/>
            <person name="Ohlin V."/>
            <person name="Ondrusek D."/>
            <person name="Pride N."/>
            <person name="Stricklin S.L."/>
            <person name="Sun J."/>
            <person name="Wheeler C."/>
            <person name="Wilson L."/>
            <person name="Zhu H."/>
            <person name="Wood D.W."/>
        </authorList>
    </citation>
    <scope>NUCLEOTIDE SEQUENCE [LARGE SCALE GENOMIC DNA]</scope>
    <source>
        <strain>K84 / ATCC BAA-868</strain>
    </source>
</reference>
<protein>
    <recommendedName>
        <fullName evidence="1">2,3,4,5-tetrahydropyridine-2,6-dicarboxylate N-succinyltransferase</fullName>
        <ecNumber evidence="1">2.3.1.117</ecNumber>
    </recommendedName>
    <alternativeName>
        <fullName evidence="1">Tetrahydrodipicolinate N-succinyltransferase</fullName>
        <shortName evidence="1">THDP succinyltransferase</shortName>
        <shortName evidence="1">THP succinyltransferase</shortName>
        <shortName evidence="1">Tetrahydropicolinate succinylase</shortName>
    </alternativeName>
</protein>
<dbReference type="EC" id="2.3.1.117" evidence="1"/>
<dbReference type="EMBL" id="CP000628">
    <property type="protein sequence ID" value="ACM25318.1"/>
    <property type="molecule type" value="Genomic_DNA"/>
</dbReference>
<dbReference type="RefSeq" id="WP_007695441.1">
    <property type="nucleotide sequence ID" value="NC_011985.1"/>
</dbReference>
<dbReference type="SMR" id="B9J8D1"/>
<dbReference type="STRING" id="311403.Arad_0685"/>
<dbReference type="GeneID" id="86847133"/>
<dbReference type="KEGG" id="ara:Arad_0685"/>
<dbReference type="eggNOG" id="COG2171">
    <property type="taxonomic scope" value="Bacteria"/>
</dbReference>
<dbReference type="HOGENOM" id="CLU_050859_0_1_5"/>
<dbReference type="UniPathway" id="UPA00034">
    <property type="reaction ID" value="UER00019"/>
</dbReference>
<dbReference type="Proteomes" id="UP000001600">
    <property type="component" value="Chromosome 1"/>
</dbReference>
<dbReference type="GO" id="GO:0005737">
    <property type="term" value="C:cytoplasm"/>
    <property type="evidence" value="ECO:0007669"/>
    <property type="project" value="UniProtKB-SubCell"/>
</dbReference>
<dbReference type="GO" id="GO:0008666">
    <property type="term" value="F:2,3,4,5-tetrahydropyridine-2,6-dicarboxylate N-succinyltransferase activity"/>
    <property type="evidence" value="ECO:0007669"/>
    <property type="project" value="UniProtKB-UniRule"/>
</dbReference>
<dbReference type="GO" id="GO:0019877">
    <property type="term" value="P:diaminopimelate biosynthetic process"/>
    <property type="evidence" value="ECO:0007669"/>
    <property type="project" value="UniProtKB-UniRule"/>
</dbReference>
<dbReference type="GO" id="GO:0009089">
    <property type="term" value="P:lysine biosynthetic process via diaminopimelate"/>
    <property type="evidence" value="ECO:0007669"/>
    <property type="project" value="UniProtKB-UniRule"/>
</dbReference>
<dbReference type="CDD" id="cd03350">
    <property type="entry name" value="LbH_THP_succinylT"/>
    <property type="match status" value="1"/>
</dbReference>
<dbReference type="Gene3D" id="2.160.10.10">
    <property type="entry name" value="Hexapeptide repeat proteins"/>
    <property type="match status" value="1"/>
</dbReference>
<dbReference type="Gene3D" id="1.10.166.10">
    <property type="entry name" value="Tetrahydrodipicolinate-N-succinyltransferase, N-terminal domain"/>
    <property type="match status" value="1"/>
</dbReference>
<dbReference type="HAMAP" id="MF_00811">
    <property type="entry name" value="DapD"/>
    <property type="match status" value="1"/>
</dbReference>
<dbReference type="InterPro" id="IPR005664">
    <property type="entry name" value="DapD_Trfase_Hexpep_rpt_fam"/>
</dbReference>
<dbReference type="InterPro" id="IPR001451">
    <property type="entry name" value="Hexapep"/>
</dbReference>
<dbReference type="InterPro" id="IPR018357">
    <property type="entry name" value="Hexapep_transf_CS"/>
</dbReference>
<dbReference type="InterPro" id="IPR023180">
    <property type="entry name" value="THP_succinylTrfase_dom1"/>
</dbReference>
<dbReference type="InterPro" id="IPR037133">
    <property type="entry name" value="THP_succinylTrfase_N_sf"/>
</dbReference>
<dbReference type="InterPro" id="IPR050179">
    <property type="entry name" value="Trans_hexapeptide_repeat"/>
</dbReference>
<dbReference type="InterPro" id="IPR011004">
    <property type="entry name" value="Trimer_LpxA-like_sf"/>
</dbReference>
<dbReference type="NCBIfam" id="TIGR00965">
    <property type="entry name" value="dapD"/>
    <property type="match status" value="1"/>
</dbReference>
<dbReference type="NCBIfam" id="NF008808">
    <property type="entry name" value="PRK11830.1"/>
    <property type="match status" value="1"/>
</dbReference>
<dbReference type="PANTHER" id="PTHR43300:SF10">
    <property type="entry name" value="2,3,4,5-TETRAHYDROPYRIDINE-2,6-DICARBOXYLATE N-ACETYLTRANSFERASE"/>
    <property type="match status" value="1"/>
</dbReference>
<dbReference type="PANTHER" id="PTHR43300">
    <property type="entry name" value="ACETYLTRANSFERASE"/>
    <property type="match status" value="1"/>
</dbReference>
<dbReference type="Pfam" id="PF14602">
    <property type="entry name" value="Hexapep_2"/>
    <property type="match status" value="1"/>
</dbReference>
<dbReference type="Pfam" id="PF14805">
    <property type="entry name" value="THDPS_N_2"/>
    <property type="match status" value="1"/>
</dbReference>
<dbReference type="SUPFAM" id="SSF51161">
    <property type="entry name" value="Trimeric LpxA-like enzymes"/>
    <property type="match status" value="1"/>
</dbReference>
<dbReference type="PROSITE" id="PS00101">
    <property type="entry name" value="HEXAPEP_TRANSFERASES"/>
    <property type="match status" value="1"/>
</dbReference>
<sequence>MSATDLASLENAIEAAFENRDNVNVSTRGEVRDAVETALNLLDSGKVRVAERGSDGNWTVNQWLKKAVLLSFRLNDMQIVDGGPGGSTWWDKVPSKFEGWGENRFREAGFRAVPNAVVRRSAYIAPNAILMPSFVNLGAYVGEGTMVDTWATVGSCAQIGKHVHLSGGVGIGGVLEPMQAGPTIIEDNCFIGARSEVVEGCIIREGSVLGMGVFIGKSTKIVDRATGEITYGEVPPYSVVVAGALPNGNTMANGQPAPSLYCAVIVKRVDEKTRSKTGINELLRD</sequence>
<comment type="catalytic activity">
    <reaction evidence="1">
        <text>(S)-2,3,4,5-tetrahydrodipicolinate + succinyl-CoA + H2O = (S)-2-succinylamino-6-oxoheptanedioate + CoA</text>
        <dbReference type="Rhea" id="RHEA:17325"/>
        <dbReference type="ChEBI" id="CHEBI:15377"/>
        <dbReference type="ChEBI" id="CHEBI:15685"/>
        <dbReference type="ChEBI" id="CHEBI:16845"/>
        <dbReference type="ChEBI" id="CHEBI:57287"/>
        <dbReference type="ChEBI" id="CHEBI:57292"/>
        <dbReference type="EC" id="2.3.1.117"/>
    </reaction>
</comment>
<comment type="pathway">
    <text evidence="1">Amino-acid biosynthesis; L-lysine biosynthesis via DAP pathway; LL-2,6-diaminopimelate from (S)-tetrahydrodipicolinate (succinylase route): step 1/3.</text>
</comment>
<comment type="subunit">
    <text evidence="1">Homotrimer.</text>
</comment>
<comment type="subcellular location">
    <subcellularLocation>
        <location evidence="1">Cytoplasm</location>
    </subcellularLocation>
</comment>
<comment type="similarity">
    <text evidence="1">Belongs to the transferase hexapeptide repeat family.</text>
</comment>
<evidence type="ECO:0000255" key="1">
    <source>
        <dbReference type="HAMAP-Rule" id="MF_00811"/>
    </source>
</evidence>